<comment type="function">
    <text evidence="4">Negative regulator of sexual differentiation. Acts by repressing the transcription of meiosis-inducing, ste11-regulated genes.</text>
</comment>
<comment type="subcellular location">
    <subcellularLocation>
        <location evidence="3">Cytoplasm</location>
    </subcellularLocation>
</comment>
<name>MSA1_SCHPO</name>
<gene>
    <name type="primary">msa1</name>
    <name type="ORF">SPAC13G7.13c</name>
    <name type="ORF">SPAC6C3.01c</name>
</gene>
<proteinExistence type="predicted"/>
<reference key="1">
    <citation type="journal article" date="2004" name="Genetics">
        <title>A novel gene, msa1, inhibits sexual differentiation in Schizosaccharomyces pombe.</title>
        <authorList>
            <person name="Jeong H.T."/>
            <person name="Ozoe F."/>
            <person name="Tanaka K."/>
            <person name="Nakagawa T."/>
            <person name="Matsuda H."/>
            <person name="Kawamukai M."/>
        </authorList>
    </citation>
    <scope>NUCLEOTIDE SEQUENCE [GENOMIC DNA]</scope>
    <scope>FUNCTION</scope>
</reference>
<reference key="2">
    <citation type="journal article" date="2002" name="Nature">
        <title>The genome sequence of Schizosaccharomyces pombe.</title>
        <authorList>
            <person name="Wood V."/>
            <person name="Gwilliam R."/>
            <person name="Rajandream M.A."/>
            <person name="Lyne M.H."/>
            <person name="Lyne R."/>
            <person name="Stewart A."/>
            <person name="Sgouros J.G."/>
            <person name="Peat N."/>
            <person name="Hayles J."/>
            <person name="Baker S.G."/>
            <person name="Basham D."/>
            <person name="Bowman S."/>
            <person name="Brooks K."/>
            <person name="Brown D."/>
            <person name="Brown S."/>
            <person name="Chillingworth T."/>
            <person name="Churcher C.M."/>
            <person name="Collins M."/>
            <person name="Connor R."/>
            <person name="Cronin A."/>
            <person name="Davis P."/>
            <person name="Feltwell T."/>
            <person name="Fraser A."/>
            <person name="Gentles S."/>
            <person name="Goble A."/>
            <person name="Hamlin N."/>
            <person name="Harris D.E."/>
            <person name="Hidalgo J."/>
            <person name="Hodgson G."/>
            <person name="Holroyd S."/>
            <person name="Hornsby T."/>
            <person name="Howarth S."/>
            <person name="Huckle E.J."/>
            <person name="Hunt S."/>
            <person name="Jagels K."/>
            <person name="James K.D."/>
            <person name="Jones L."/>
            <person name="Jones M."/>
            <person name="Leather S."/>
            <person name="McDonald S."/>
            <person name="McLean J."/>
            <person name="Mooney P."/>
            <person name="Moule S."/>
            <person name="Mungall K.L."/>
            <person name="Murphy L.D."/>
            <person name="Niblett D."/>
            <person name="Odell C."/>
            <person name="Oliver K."/>
            <person name="O'Neil S."/>
            <person name="Pearson D."/>
            <person name="Quail M.A."/>
            <person name="Rabbinowitsch E."/>
            <person name="Rutherford K.M."/>
            <person name="Rutter S."/>
            <person name="Saunders D."/>
            <person name="Seeger K."/>
            <person name="Sharp S."/>
            <person name="Skelton J."/>
            <person name="Simmonds M.N."/>
            <person name="Squares R."/>
            <person name="Squares S."/>
            <person name="Stevens K."/>
            <person name="Taylor K."/>
            <person name="Taylor R.G."/>
            <person name="Tivey A."/>
            <person name="Walsh S.V."/>
            <person name="Warren T."/>
            <person name="Whitehead S."/>
            <person name="Woodward J.R."/>
            <person name="Volckaert G."/>
            <person name="Aert R."/>
            <person name="Robben J."/>
            <person name="Grymonprez B."/>
            <person name="Weltjens I."/>
            <person name="Vanstreels E."/>
            <person name="Rieger M."/>
            <person name="Schaefer M."/>
            <person name="Mueller-Auer S."/>
            <person name="Gabel C."/>
            <person name="Fuchs M."/>
            <person name="Duesterhoeft A."/>
            <person name="Fritzc C."/>
            <person name="Holzer E."/>
            <person name="Moestl D."/>
            <person name="Hilbert H."/>
            <person name="Borzym K."/>
            <person name="Langer I."/>
            <person name="Beck A."/>
            <person name="Lehrach H."/>
            <person name="Reinhardt R."/>
            <person name="Pohl T.M."/>
            <person name="Eger P."/>
            <person name="Zimmermann W."/>
            <person name="Wedler H."/>
            <person name="Wambutt R."/>
            <person name="Purnelle B."/>
            <person name="Goffeau A."/>
            <person name="Cadieu E."/>
            <person name="Dreano S."/>
            <person name="Gloux S."/>
            <person name="Lelaure V."/>
            <person name="Mottier S."/>
            <person name="Galibert F."/>
            <person name="Aves S.J."/>
            <person name="Xiang Z."/>
            <person name="Hunt C."/>
            <person name="Moore K."/>
            <person name="Hurst S.M."/>
            <person name="Lucas M."/>
            <person name="Rochet M."/>
            <person name="Gaillardin C."/>
            <person name="Tallada V.A."/>
            <person name="Garzon A."/>
            <person name="Thode G."/>
            <person name="Daga R.R."/>
            <person name="Cruzado L."/>
            <person name="Jimenez J."/>
            <person name="Sanchez M."/>
            <person name="del Rey F."/>
            <person name="Benito J."/>
            <person name="Dominguez A."/>
            <person name="Revuelta J.L."/>
            <person name="Moreno S."/>
            <person name="Armstrong J."/>
            <person name="Forsburg S.L."/>
            <person name="Cerutti L."/>
            <person name="Lowe T."/>
            <person name="McCombie W.R."/>
            <person name="Paulsen I."/>
            <person name="Potashkin J."/>
            <person name="Shpakovski G.V."/>
            <person name="Ussery D."/>
            <person name="Barrell B.G."/>
            <person name="Nurse P."/>
        </authorList>
    </citation>
    <scope>NUCLEOTIDE SEQUENCE [LARGE SCALE GENOMIC DNA]</scope>
    <source>
        <strain>972 / ATCC 24843</strain>
    </source>
</reference>
<reference key="3">
    <citation type="journal article" date="2000" name="Genes Cells">
        <title>Large-scale screening of intracellular protein localization in living fission yeast cells by the use of a GFP-fusion genomic DNA library.</title>
        <authorList>
            <person name="Ding D.-Q."/>
            <person name="Tomita Y."/>
            <person name="Yamamoto A."/>
            <person name="Chikashige Y."/>
            <person name="Haraguchi T."/>
            <person name="Hiraoka Y."/>
        </authorList>
    </citation>
    <scope>NUCLEOTIDE SEQUENCE [LARGE SCALE GENOMIC DNA] OF 210-384</scope>
    <scope>SUBCELLULAR LOCATION</scope>
    <source>
        <strain>ATCC 38364 / 968</strain>
    </source>
</reference>
<keyword id="KW-0963">Cytoplasm</keyword>
<keyword id="KW-1185">Reference proteome</keyword>
<keyword id="KW-0677">Repeat</keyword>
<keyword id="KW-0678">Repressor</keyword>
<keyword id="KW-0694">RNA-binding</keyword>
<keyword id="KW-0804">Transcription</keyword>
<keyword id="KW-0805">Transcription regulation</keyword>
<protein>
    <recommendedName>
        <fullName>Multicopy suppressor of sporulation protein msa1</fullName>
    </recommendedName>
</protein>
<feature type="chain" id="PRO_0000081648" description="Multicopy suppressor of sporulation protein msa1">
    <location>
        <begin position="1"/>
        <end position="533"/>
    </location>
</feature>
<feature type="domain" description="RRM 1" evidence="1">
    <location>
        <begin position="79"/>
        <end position="158"/>
    </location>
</feature>
<feature type="domain" description="RRM 2" evidence="1">
    <location>
        <begin position="365"/>
        <end position="441"/>
    </location>
</feature>
<feature type="region of interest" description="Disordered" evidence="2">
    <location>
        <begin position="30"/>
        <end position="68"/>
    </location>
</feature>
<feature type="region of interest" description="Disordered" evidence="2">
    <location>
        <begin position="237"/>
        <end position="292"/>
    </location>
</feature>
<feature type="compositionally biased region" description="Polar residues" evidence="2">
    <location>
        <begin position="36"/>
        <end position="45"/>
    </location>
</feature>
<feature type="compositionally biased region" description="Low complexity" evidence="2">
    <location>
        <begin position="54"/>
        <end position="68"/>
    </location>
</feature>
<feature type="compositionally biased region" description="Polar residues" evidence="2">
    <location>
        <begin position="277"/>
        <end position="292"/>
    </location>
</feature>
<dbReference type="EMBL" id="CU329670">
    <property type="protein sequence ID" value="CAA93601.2"/>
    <property type="molecule type" value="Genomic_DNA"/>
</dbReference>
<dbReference type="EMBL" id="AB028018">
    <property type="protein sequence ID" value="BAA87322.1"/>
    <property type="molecule type" value="Genomic_DNA"/>
</dbReference>
<dbReference type="PIR" id="T39025">
    <property type="entry name" value="T39025"/>
</dbReference>
<dbReference type="RefSeq" id="NP_593715.2">
    <property type="nucleotide sequence ID" value="NM_001019146.2"/>
</dbReference>
<dbReference type="BioGRID" id="279307">
    <property type="interactions" value="72"/>
</dbReference>
<dbReference type="FunCoup" id="Q10277">
    <property type="interactions" value="417"/>
</dbReference>
<dbReference type="STRING" id="284812.Q10277"/>
<dbReference type="iPTMnet" id="Q10277"/>
<dbReference type="PaxDb" id="4896-SPAC13G7.13c.1"/>
<dbReference type="EnsemblFungi" id="SPAC13G7.13c.1">
    <property type="protein sequence ID" value="SPAC13G7.13c.1:pep"/>
    <property type="gene ID" value="SPAC13G7.13c"/>
</dbReference>
<dbReference type="GeneID" id="2542861"/>
<dbReference type="KEGG" id="spo:2542861"/>
<dbReference type="PomBase" id="SPAC13G7.13c">
    <property type="gene designation" value="msa1"/>
</dbReference>
<dbReference type="VEuPathDB" id="FungiDB:SPAC13G7.13c"/>
<dbReference type="eggNOG" id="ENOG502QUGB">
    <property type="taxonomic scope" value="Eukaryota"/>
</dbReference>
<dbReference type="HOGENOM" id="CLU_511061_0_0_1"/>
<dbReference type="InParanoid" id="Q10277"/>
<dbReference type="OMA" id="PYYPYPE"/>
<dbReference type="PRO" id="PR:Q10277"/>
<dbReference type="Proteomes" id="UP000002485">
    <property type="component" value="Chromosome I"/>
</dbReference>
<dbReference type="GO" id="GO:0005737">
    <property type="term" value="C:cytoplasm"/>
    <property type="evidence" value="ECO:0000318"/>
    <property type="project" value="GO_Central"/>
</dbReference>
<dbReference type="GO" id="GO:0005829">
    <property type="term" value="C:cytosol"/>
    <property type="evidence" value="ECO:0007005"/>
    <property type="project" value="PomBase"/>
</dbReference>
<dbReference type="GO" id="GO:0003729">
    <property type="term" value="F:mRNA binding"/>
    <property type="evidence" value="ECO:0000318"/>
    <property type="project" value="GO_Central"/>
</dbReference>
<dbReference type="GO" id="GO:0031138">
    <property type="term" value="P:negative regulation of conjugation with cellular fusion"/>
    <property type="evidence" value="ECO:0000315"/>
    <property type="project" value="PomBase"/>
</dbReference>
<dbReference type="GO" id="GO:0010629">
    <property type="term" value="P:negative regulation of gene expression"/>
    <property type="evidence" value="ECO:0000315"/>
    <property type="project" value="PomBase"/>
</dbReference>
<dbReference type="CDD" id="cd12453">
    <property type="entry name" value="RRM1_RIM4_like"/>
    <property type="match status" value="1"/>
</dbReference>
<dbReference type="CDD" id="cd12454">
    <property type="entry name" value="RRM2_RIM4_like"/>
    <property type="match status" value="1"/>
</dbReference>
<dbReference type="Gene3D" id="3.30.70.330">
    <property type="match status" value="3"/>
</dbReference>
<dbReference type="InterPro" id="IPR012677">
    <property type="entry name" value="Nucleotide-bd_a/b_plait_sf"/>
</dbReference>
<dbReference type="InterPro" id="IPR035979">
    <property type="entry name" value="RBD_domain_sf"/>
</dbReference>
<dbReference type="InterPro" id="IPR034352">
    <property type="entry name" value="Rim4_RRM1"/>
</dbReference>
<dbReference type="InterPro" id="IPR000504">
    <property type="entry name" value="RRM_dom"/>
</dbReference>
<dbReference type="InterPro" id="IPR050907">
    <property type="entry name" value="SRSF"/>
</dbReference>
<dbReference type="PANTHER" id="PTHR23147">
    <property type="entry name" value="SERINE/ARGININE RICH SPLICING FACTOR"/>
    <property type="match status" value="1"/>
</dbReference>
<dbReference type="Pfam" id="PF00076">
    <property type="entry name" value="RRM_1"/>
    <property type="match status" value="2"/>
</dbReference>
<dbReference type="SMART" id="SM00360">
    <property type="entry name" value="RRM"/>
    <property type="match status" value="3"/>
</dbReference>
<dbReference type="SUPFAM" id="SSF54928">
    <property type="entry name" value="RNA-binding domain, RBD"/>
    <property type="match status" value="2"/>
</dbReference>
<dbReference type="PROSITE" id="PS50102">
    <property type="entry name" value="RRM"/>
    <property type="match status" value="2"/>
</dbReference>
<organism>
    <name type="scientific">Schizosaccharomyces pombe (strain 972 / ATCC 24843)</name>
    <name type="common">Fission yeast</name>
    <dbReference type="NCBI Taxonomy" id="284812"/>
    <lineage>
        <taxon>Eukaryota</taxon>
        <taxon>Fungi</taxon>
        <taxon>Dikarya</taxon>
        <taxon>Ascomycota</taxon>
        <taxon>Taphrinomycotina</taxon>
        <taxon>Schizosaccharomycetes</taxon>
        <taxon>Schizosaccharomycetales</taxon>
        <taxon>Schizosaccharomycetaceae</taxon>
        <taxon>Schizosaccharomyces</taxon>
    </lineage>
</organism>
<evidence type="ECO:0000255" key="1">
    <source>
        <dbReference type="PROSITE-ProRule" id="PRU00176"/>
    </source>
</evidence>
<evidence type="ECO:0000256" key="2">
    <source>
        <dbReference type="SAM" id="MobiDB-lite"/>
    </source>
</evidence>
<evidence type="ECO:0000269" key="3">
    <source>
    </source>
</evidence>
<evidence type="ECO:0000269" key="4">
    <source>
    </source>
</evidence>
<sequence length="533" mass="59118">MVVSSPSVSLLHSPVEKLSAQLEKTTLLQDIPPGSLSENDNSTTFIKPPLETASSSTPIPSSSSSGVLNPSSVRGKPVACLFVASLNSSRSEEELTATVKDYFQQWGPLLHVKVLKDWLQRPYSFVQFQNTDDASKALSEAQNTILDGRHIRIERAKVNRTIRISSAPHQPYITKKDIDNLLEPYGEVEDVTEIPDQSAFLVRFVYRDEAIAAYTALKHSAWPVLWAENVTYQNGHYKKKGSSPFSPPNAHSRRRKSQGKDQSNTPVIKAPAPIPFSVSSDPPSTMGRSNSAVQSPSYFAHSLVNSTEFSTPNESLSSLPSILPSIPSLESGKAELPTDGSFEQPGYPMNPSMMFAAMPPPIDPYSIFVGQLDPVNCTHYLLVDLFSKYGKVIDCKIIHQSKKPAFAFLRFDSQQAAYAAVCGKTRSPHQKKPLRVEFRQLRPMQQFSPQYQYPSYPYPMFPAPFSPPRNAMMPIPAPMDQFSTFHQSMATLPPGAVPTSIPQSYYPIYSPEMAMPQSYSPMYYTHNPPMDGN</sequence>
<accession>Q10277</accession>
<accession>Q9US63</accession>